<protein>
    <recommendedName>
        <fullName>C-type natriuretic peptide 4</fullName>
    </recommendedName>
</protein>
<gene>
    <name evidence="9" type="primary">cnp-4</name>
</gene>
<proteinExistence type="evidence at transcript level"/>
<accession>Q800I7</accession>
<feature type="signal peptide" evidence="3">
    <location>
        <begin position="1"/>
        <end position="22"/>
    </location>
</feature>
<feature type="propeptide" id="PRO_0000001599" evidence="1">
    <location>
        <begin position="23"/>
        <end position="96"/>
    </location>
</feature>
<feature type="peptide" id="PRO_0000001600" description="C-type natriuretic peptide 4">
    <location>
        <begin position="97"/>
        <end position="121"/>
    </location>
</feature>
<feature type="region of interest" description="Disordered" evidence="5">
    <location>
        <begin position="80"/>
        <end position="109"/>
    </location>
</feature>
<feature type="disulfide bond" evidence="2">
    <location>
        <begin position="105"/>
        <end position="121"/>
    </location>
</feature>
<dbReference type="EMBL" id="AB091699">
    <property type="protein sequence ID" value="BAC65998.1"/>
    <property type="molecule type" value="mRNA"/>
</dbReference>
<dbReference type="FunCoup" id="Q800I7">
    <property type="interactions" value="360"/>
</dbReference>
<dbReference type="STRING" id="8090.ENSORLP00000037865"/>
<dbReference type="Ensembl" id="ENSORLT00000041713.1">
    <property type="protein sequence ID" value="ENSORLP00000037865.1"/>
    <property type="gene ID" value="ENSORLG00000022637.1"/>
</dbReference>
<dbReference type="KEGG" id="ola:100049239"/>
<dbReference type="CTD" id="4880"/>
<dbReference type="eggNOG" id="ENOG502S2QY">
    <property type="taxonomic scope" value="Eukaryota"/>
</dbReference>
<dbReference type="GeneTree" id="ENSGT00390000015492"/>
<dbReference type="HOGENOM" id="CLU_160791_0_0_1"/>
<dbReference type="InParanoid" id="Q800I7"/>
<dbReference type="OMA" id="SHFLACG"/>
<dbReference type="OrthoDB" id="8911465at2759"/>
<dbReference type="TreeFam" id="TF106305"/>
<dbReference type="Proteomes" id="UP000001038">
    <property type="component" value="Chromosome 4"/>
</dbReference>
<dbReference type="Proteomes" id="UP000265180">
    <property type="component" value="Unplaced"/>
</dbReference>
<dbReference type="Proteomes" id="UP000265200">
    <property type="component" value="Unplaced"/>
</dbReference>
<dbReference type="Bgee" id="ENSORLG00000022637">
    <property type="expression patterns" value="Expressed in heart and 3 other cell types or tissues"/>
</dbReference>
<dbReference type="GO" id="GO:0005576">
    <property type="term" value="C:extracellular region"/>
    <property type="evidence" value="ECO:0007669"/>
    <property type="project" value="UniProtKB-SubCell"/>
</dbReference>
<dbReference type="GO" id="GO:0005179">
    <property type="term" value="F:hormone activity"/>
    <property type="evidence" value="ECO:0000318"/>
    <property type="project" value="GO_Central"/>
</dbReference>
<dbReference type="GO" id="GO:0051427">
    <property type="term" value="F:hormone receptor binding"/>
    <property type="evidence" value="ECO:0000318"/>
    <property type="project" value="GO_Central"/>
</dbReference>
<dbReference type="GO" id="GO:0097746">
    <property type="term" value="P:blood vessel diameter maintenance"/>
    <property type="evidence" value="ECO:0007669"/>
    <property type="project" value="UniProtKB-KW"/>
</dbReference>
<dbReference type="GO" id="GO:0006182">
    <property type="term" value="P:cGMP biosynthetic process"/>
    <property type="evidence" value="ECO:0000318"/>
    <property type="project" value="GO_Central"/>
</dbReference>
<dbReference type="GO" id="GO:0007168">
    <property type="term" value="P:receptor guanylyl cyclase signaling pathway"/>
    <property type="evidence" value="ECO:0000318"/>
    <property type="project" value="GO_Central"/>
</dbReference>
<dbReference type="InterPro" id="IPR000663">
    <property type="entry name" value="Natr_peptide"/>
</dbReference>
<dbReference type="InterPro" id="IPR030480">
    <property type="entry name" value="Natr_peptide_CS"/>
</dbReference>
<dbReference type="InterPro" id="IPR002408">
    <property type="entry name" value="Natriuretic_peptide_brain"/>
</dbReference>
<dbReference type="PANTHER" id="PTHR12167">
    <property type="entry name" value="C-TYPE NATRIURETIC PEPTIDE"/>
    <property type="match status" value="1"/>
</dbReference>
<dbReference type="PANTHER" id="PTHR12167:SF2">
    <property type="entry name" value="C-TYPE NATRIURETIC PEPTIDE"/>
    <property type="match status" value="1"/>
</dbReference>
<dbReference type="Pfam" id="PF00212">
    <property type="entry name" value="ANP"/>
    <property type="match status" value="1"/>
</dbReference>
<dbReference type="PRINTS" id="PR00712">
    <property type="entry name" value="BNATPEPTIDE"/>
</dbReference>
<dbReference type="PRINTS" id="PR00710">
    <property type="entry name" value="NATPEPTIDES"/>
</dbReference>
<dbReference type="SMART" id="SM00183">
    <property type="entry name" value="NAT_PEP"/>
    <property type="match status" value="1"/>
</dbReference>
<dbReference type="PROSITE" id="PS00263">
    <property type="entry name" value="NATRIURETIC_PEPTIDE"/>
    <property type="match status" value="1"/>
</dbReference>
<organism>
    <name type="scientific">Oryzias latipes</name>
    <name type="common">Japanese rice fish</name>
    <name type="synonym">Japanese killifish</name>
    <dbReference type="NCBI Taxonomy" id="8090"/>
    <lineage>
        <taxon>Eukaryota</taxon>
        <taxon>Metazoa</taxon>
        <taxon>Chordata</taxon>
        <taxon>Craniata</taxon>
        <taxon>Vertebrata</taxon>
        <taxon>Euteleostomi</taxon>
        <taxon>Actinopterygii</taxon>
        <taxon>Neopterygii</taxon>
        <taxon>Teleostei</taxon>
        <taxon>Neoteleostei</taxon>
        <taxon>Acanthomorphata</taxon>
        <taxon>Ovalentaria</taxon>
        <taxon>Atherinomorphae</taxon>
        <taxon>Beloniformes</taxon>
        <taxon>Adrianichthyidae</taxon>
        <taxon>Oryziinae</taxon>
        <taxon>Oryzias</taxon>
    </lineage>
</organism>
<reference evidence="8 9" key="1">
    <citation type="journal article" date="2003" name="Proc. Natl. Acad. Sci. U.S.A.">
        <title>Four functionally distinct C-type natriuretic peptides found in fish reveal evolutionary history of the natriuretic peptide system.</title>
        <authorList>
            <person name="Inoue K."/>
            <person name="Naruse K."/>
            <person name="Yamagami S."/>
            <person name="Mitani H."/>
            <person name="Suzuki N."/>
            <person name="Takei Y."/>
        </authorList>
    </citation>
    <scope>NUCLEOTIDE SEQUENCE [MRNA]</scope>
    <scope>FUNCTION</scope>
    <scope>TISSUE SPECIFICITY</scope>
    <scope>SYNTHESIS</scope>
    <source>
        <tissue evidence="9">Brain</tissue>
    </source>
</reference>
<evidence type="ECO:0000250" key="1"/>
<evidence type="ECO:0000250" key="2">
    <source>
        <dbReference type="UniProtKB" id="P18145"/>
    </source>
</evidence>
<evidence type="ECO:0000255" key="3"/>
<evidence type="ECO:0000255" key="4">
    <source>
        <dbReference type="RuleBase" id="RU003686"/>
    </source>
</evidence>
<evidence type="ECO:0000256" key="5">
    <source>
        <dbReference type="SAM" id="MobiDB-lite"/>
    </source>
</evidence>
<evidence type="ECO:0000269" key="6">
    <source>
    </source>
</evidence>
<evidence type="ECO:0000303" key="7">
    <source>
    </source>
</evidence>
<evidence type="ECO:0000305" key="8"/>
<evidence type="ECO:0000312" key="9">
    <source>
        <dbReference type="EMBL" id="BAC65998.1"/>
    </source>
</evidence>
<comment type="function">
    <text evidence="2 6 7">Exhibits natriuretic and vasodepressant activity. Has cGMP-stimulating activity. May help to regulate body fluid homeostasis in a variety of aquatic environments.</text>
</comment>
<comment type="subcellular location">
    <subcellularLocation>
        <location>Secreted</location>
    </subcellularLocation>
</comment>
<comment type="tissue specificity">
    <text evidence="6">Brain, spinal cord, spleen, heart and fin, and to a lower extent in gill and ovary.</text>
</comment>
<comment type="similarity">
    <text evidence="4">Belongs to the natriuretic peptide family.</text>
</comment>
<keyword id="KW-0165">Cleavage on pair of basic residues</keyword>
<keyword id="KW-1015">Disulfide bond</keyword>
<keyword id="KW-0372">Hormone</keyword>
<keyword id="KW-1185">Reference proteome</keyword>
<keyword id="KW-0964">Secreted</keyword>
<keyword id="KW-0732">Signal</keyword>
<keyword id="KW-0838">Vasoactive</keyword>
<sequence length="121" mass="13457">MNLSYLVACGLLVTFLSDKMDAQPLTPAQQKSLRSLLGEELAEFLESGENENRLDDVRSRMRLLRDLRVDTRARGMWARLLNDQPASRRHKSGSKKGGSTSRSGCFGHKMDRIGTISGMGC</sequence>
<name>ANFC4_ORYLA</name>